<proteinExistence type="inferred from homology"/>
<organism>
    <name type="scientific">Saccharomyces cerevisiae (strain JAY291)</name>
    <name type="common">Baker's yeast</name>
    <dbReference type="NCBI Taxonomy" id="574961"/>
    <lineage>
        <taxon>Eukaryota</taxon>
        <taxon>Fungi</taxon>
        <taxon>Dikarya</taxon>
        <taxon>Ascomycota</taxon>
        <taxon>Saccharomycotina</taxon>
        <taxon>Saccharomycetes</taxon>
        <taxon>Saccharomycetales</taxon>
        <taxon>Saccharomycetaceae</taxon>
        <taxon>Saccharomyces</taxon>
    </lineage>
</organism>
<dbReference type="EMBL" id="ACFL01000037">
    <property type="protein sequence ID" value="EEU08286.1"/>
    <property type="molecule type" value="Genomic_DNA"/>
</dbReference>
<dbReference type="Proteomes" id="UP000008073">
    <property type="component" value="Unassembled WGS sequence"/>
</dbReference>
<dbReference type="GO" id="GO:0005730">
    <property type="term" value="C:nucleolus"/>
    <property type="evidence" value="ECO:0007669"/>
    <property type="project" value="UniProtKB-SubCell"/>
</dbReference>
<dbReference type="InterPro" id="IPR031391">
    <property type="entry name" value="Swm2"/>
</dbReference>
<dbReference type="Pfam" id="PF17083">
    <property type="entry name" value="Swm2"/>
    <property type="match status" value="1"/>
</dbReference>
<name>SWM2_YEAS2</name>
<keyword id="KW-0539">Nucleus</keyword>
<protein>
    <recommendedName>
        <fullName>Nucleolar protein SWM2</fullName>
    </recommendedName>
    <alternativeName>
        <fullName>Synthetic With MUD2-delta protein 2</fullName>
    </alternativeName>
</protein>
<reference key="1">
    <citation type="journal article" date="2009" name="Genome Res.">
        <title>Genome structure of a Saccharomyces cerevisiae strain widely used in bioethanol production.</title>
        <authorList>
            <person name="Argueso J.L."/>
            <person name="Carazzolle M.F."/>
            <person name="Mieczkowski P.A."/>
            <person name="Duarte F.M."/>
            <person name="Netto O.V.C."/>
            <person name="Missawa S.K."/>
            <person name="Galzerani F."/>
            <person name="Costa G.G.L."/>
            <person name="Vidal R.O."/>
            <person name="Noronha M.F."/>
            <person name="Dominska M."/>
            <person name="Andrietta M.G.S."/>
            <person name="Andrietta S.R."/>
            <person name="Cunha A.F."/>
            <person name="Gomes L.H."/>
            <person name="Tavares F.C.A."/>
            <person name="Alcarde A.R."/>
            <person name="Dietrich F.S."/>
            <person name="McCusker J.H."/>
            <person name="Petes T.D."/>
            <person name="Pereira G.A.G."/>
        </authorList>
    </citation>
    <scope>NUCLEOTIDE SEQUENCE [LARGE SCALE GENOMIC DNA]</scope>
    <source>
        <strain>JAY291</strain>
    </source>
</reference>
<gene>
    <name type="primary">SWM2</name>
    <name type="ORF">C1Q_01127</name>
</gene>
<feature type="chain" id="PRO_0000405677" description="Nucleolar protein SWM2">
    <location>
        <begin position="1"/>
        <end position="146"/>
    </location>
</feature>
<evidence type="ECO:0000250" key="1"/>
<evidence type="ECO:0000305" key="2"/>
<accession>C7GLQ0</accession>
<comment type="subcellular location">
    <subcellularLocation>
        <location evidence="1">Nucleus</location>
        <location evidence="1">Nucleolus</location>
    </subcellularLocation>
</comment>
<comment type="similarity">
    <text evidence="2">Belongs to the SWM2 family.</text>
</comment>
<sequence>MIDLYNYSNLEGLLDGLTDLNRIPKEYSAVLEPYFQNIARNAHLKSRALKICRSNFHKWNEEGAKTVNPEIIRRCLNLWYVLKGKEYKKLKDPPPADNIIKDEIDVSYVKNLNVVRLEFDEFGKLISNPLENLILEEVEVNDFIQE</sequence>